<organism>
    <name type="scientific">Streptococcus pyogenes serotype M28 (strain MGAS6180)</name>
    <dbReference type="NCBI Taxonomy" id="319701"/>
    <lineage>
        <taxon>Bacteria</taxon>
        <taxon>Bacillati</taxon>
        <taxon>Bacillota</taxon>
        <taxon>Bacilli</taxon>
        <taxon>Lactobacillales</taxon>
        <taxon>Streptococcaceae</taxon>
        <taxon>Streptococcus</taxon>
    </lineage>
</organism>
<dbReference type="EMBL" id="CP000056">
    <property type="protein sequence ID" value="AAX72257.1"/>
    <property type="molecule type" value="Genomic_DNA"/>
</dbReference>
<dbReference type="RefSeq" id="WP_011284942.1">
    <property type="nucleotide sequence ID" value="NC_007296.2"/>
</dbReference>
<dbReference type="KEGG" id="spb:M28_Spy1147"/>
<dbReference type="HOGENOM" id="CLU_008142_4_1_9"/>
<dbReference type="GO" id="GO:0005886">
    <property type="term" value="C:plasma membrane"/>
    <property type="evidence" value="ECO:0007669"/>
    <property type="project" value="UniProtKB-SubCell"/>
</dbReference>
<dbReference type="GO" id="GO:0015079">
    <property type="term" value="F:potassium ion transmembrane transporter activity"/>
    <property type="evidence" value="ECO:0007669"/>
    <property type="project" value="UniProtKB-UniRule"/>
</dbReference>
<dbReference type="GO" id="GO:0015293">
    <property type="term" value="F:symporter activity"/>
    <property type="evidence" value="ECO:0007669"/>
    <property type="project" value="UniProtKB-UniRule"/>
</dbReference>
<dbReference type="HAMAP" id="MF_01522">
    <property type="entry name" value="Kup"/>
    <property type="match status" value="1"/>
</dbReference>
<dbReference type="InterPro" id="IPR003855">
    <property type="entry name" value="K+_transporter"/>
</dbReference>
<dbReference type="InterPro" id="IPR053952">
    <property type="entry name" value="K_trans_C"/>
</dbReference>
<dbReference type="InterPro" id="IPR053951">
    <property type="entry name" value="K_trans_N"/>
</dbReference>
<dbReference type="InterPro" id="IPR023051">
    <property type="entry name" value="Kup"/>
</dbReference>
<dbReference type="PANTHER" id="PTHR30540:SF83">
    <property type="entry name" value="K+ POTASSIUM TRANSPORTER"/>
    <property type="match status" value="1"/>
</dbReference>
<dbReference type="PANTHER" id="PTHR30540">
    <property type="entry name" value="OSMOTIC STRESS POTASSIUM TRANSPORTER"/>
    <property type="match status" value="1"/>
</dbReference>
<dbReference type="Pfam" id="PF02705">
    <property type="entry name" value="K_trans"/>
    <property type="match status" value="1"/>
</dbReference>
<dbReference type="Pfam" id="PF22776">
    <property type="entry name" value="K_trans_C"/>
    <property type="match status" value="1"/>
</dbReference>
<feature type="chain" id="PRO_0000279837" description="Probable potassium transport system protein Kup">
    <location>
        <begin position="1"/>
        <end position="666"/>
    </location>
</feature>
<feature type="transmembrane region" description="Helical" evidence="1">
    <location>
        <begin position="16"/>
        <end position="36"/>
    </location>
</feature>
<feature type="transmembrane region" description="Helical" evidence="1">
    <location>
        <begin position="58"/>
        <end position="78"/>
    </location>
</feature>
<feature type="transmembrane region" description="Helical" evidence="1">
    <location>
        <begin position="98"/>
        <end position="118"/>
    </location>
</feature>
<feature type="transmembrane region" description="Helical" evidence="1">
    <location>
        <begin position="141"/>
        <end position="161"/>
    </location>
</feature>
<feature type="transmembrane region" description="Helical" evidence="1">
    <location>
        <begin position="165"/>
        <end position="185"/>
    </location>
</feature>
<feature type="transmembrane region" description="Helical" evidence="1">
    <location>
        <begin position="221"/>
        <end position="241"/>
    </location>
</feature>
<feature type="transmembrane region" description="Helical" evidence="1">
    <location>
        <begin position="253"/>
        <end position="273"/>
    </location>
</feature>
<feature type="transmembrane region" description="Helical" evidence="1">
    <location>
        <begin position="299"/>
        <end position="319"/>
    </location>
</feature>
<feature type="transmembrane region" description="Helical" evidence="1">
    <location>
        <begin position="343"/>
        <end position="363"/>
    </location>
</feature>
<feature type="transmembrane region" description="Helical" evidence="1">
    <location>
        <begin position="373"/>
        <end position="393"/>
    </location>
</feature>
<feature type="transmembrane region" description="Helical" evidence="1">
    <location>
        <begin position="399"/>
        <end position="419"/>
    </location>
</feature>
<feature type="transmembrane region" description="Helical" evidence="1">
    <location>
        <begin position="424"/>
        <end position="444"/>
    </location>
</feature>
<sequence>MSDSHLTAFDKASKAGFIIALGIVYGDIGTSPLYTMQSLVENQGGVNQVSESFILGSISLIIWTLTLITTIKYVLIALKADNHHEGGIFSLFTLVRKISPWLIIPAMIGGATLLSDGALTPAVTVTSAIEGLKAVPGLSHIYQNQTNVIITTLVILIVLFGIQRFGTGFIGKIFGPVMFIWFSFLGVSGFFNTLGHLEIFKAINPYYALHLLFSPENHRGIFILGSIFLATTGAEALYSDLGHVGRGNIYVSWPFVKMCIVLSYCGQAAWILANKHSGIELNPFFASVPSQLRVYLVSLATLAAIIASQALISGSFTLISEAMRLKIFPLFRVTYPGANLGQLYIPVINWILFAVTSCTVLAFRTSAHMEAAYGLAITITMLMTTILLKYYLIKKGTRPILAHLAMAFFALVEFIFFLASAIKFMHGGYAVVILALAIVFVMFIWHAGTRIVFKYVKSLNLNDYKEQIKQLRDDVCFDLYQTNVVYLSNRMQDHMIDRSILYSILDKRPKRAQVYWFVNVQVTDEPYTAKYKVDMMGTDYMVRVNLYLGFRMPQTVPRYLRTIVQDLMESGRLPKQEQEYTITPGRDVGDFRFVLIEERVTNARQLSNFERFIMQTKASIKHVTASPMRWFGLQYSEVTLEVVPLILSDVLKLPIKELVPVEDSEA</sequence>
<comment type="function">
    <text evidence="1">Transport of potassium into the cell. Likely operates as a K(+):H(+) symporter.</text>
</comment>
<comment type="catalytic activity">
    <reaction evidence="1">
        <text>K(+)(in) + H(+)(in) = K(+)(out) + H(+)(out)</text>
        <dbReference type="Rhea" id="RHEA:28490"/>
        <dbReference type="ChEBI" id="CHEBI:15378"/>
        <dbReference type="ChEBI" id="CHEBI:29103"/>
    </reaction>
    <physiologicalReaction direction="right-to-left" evidence="1">
        <dbReference type="Rhea" id="RHEA:28492"/>
    </physiologicalReaction>
</comment>
<comment type="subcellular location">
    <subcellularLocation>
        <location evidence="1">Cell membrane</location>
        <topology evidence="1">Multi-pass membrane protein</topology>
    </subcellularLocation>
</comment>
<comment type="similarity">
    <text evidence="1">Belongs to the HAK/KUP transporter (TC 2.A.72) family.</text>
</comment>
<proteinExistence type="inferred from homology"/>
<name>KUP_STRPM</name>
<accession>Q48SQ3</accession>
<evidence type="ECO:0000255" key="1">
    <source>
        <dbReference type="HAMAP-Rule" id="MF_01522"/>
    </source>
</evidence>
<protein>
    <recommendedName>
        <fullName evidence="1">Probable potassium transport system protein Kup</fullName>
    </recommendedName>
</protein>
<reference key="1">
    <citation type="journal article" date="2005" name="J. Infect. Dis.">
        <title>Genome sequence of a serotype M28 strain of group A Streptococcus: potential new insights into puerperal sepsis and bacterial disease specificity.</title>
        <authorList>
            <person name="Green N.M."/>
            <person name="Zhang S."/>
            <person name="Porcella S.F."/>
            <person name="Nagiec M.J."/>
            <person name="Barbian K.D."/>
            <person name="Beres S.B."/>
            <person name="Lefebvre R.B."/>
            <person name="Musser J.M."/>
        </authorList>
    </citation>
    <scope>NUCLEOTIDE SEQUENCE [LARGE SCALE GENOMIC DNA]</scope>
    <source>
        <strain>MGAS6180</strain>
    </source>
</reference>
<keyword id="KW-1003">Cell membrane</keyword>
<keyword id="KW-0406">Ion transport</keyword>
<keyword id="KW-0472">Membrane</keyword>
<keyword id="KW-0630">Potassium</keyword>
<keyword id="KW-0633">Potassium transport</keyword>
<keyword id="KW-0769">Symport</keyword>
<keyword id="KW-0812">Transmembrane</keyword>
<keyword id="KW-1133">Transmembrane helix</keyword>
<keyword id="KW-0813">Transport</keyword>
<gene>
    <name evidence="1" type="primary">kup</name>
    <name type="ordered locus">M28_Spy1147</name>
</gene>